<sequence length="1149" mass="134381">MGIRFIYGRAGTGKTYFCLREIKEKINDGNSHPLILLVPEQFTFEAEKYLLETVEKDRKMRAQVLSFKTLANRVFTEVGGLTRQHVNSCGRSMVIYKIMEDLKENLKVYYKASRQQGFIKKISEVITEFKRFEVTPEKLMDTAESIQKEGLREKLRELSLIYGKFDELLHQKYIDEEDALTLLAEKLEYSEQFKGAEFWIDGFTGFTPKQYKVLEKLLKKAARVSVTLTMDTSKDSIDNTDLFYTTKKTEDKLLKICYENNISYEKPVDLNEGVPKRFEKNEEMAFLEKHLFSYPYKIYSKDTKNISLFKAVNVYSEVEETAREIIRLVRDENLRYSDIVVTARDLKRYHKLIKTIFSHYGIPHFIDLKLDIKNNPIIVYITSLFEIYLKNWSYESVFRHLKTGFTNLNKEDISFLENYVLANGIKGGKWKEEWKYSFRNRLDKLFDDQDEKEALEKVNTIKNGISEPLNKFYKDFSNANTVREACEILYNFLVERDIPQRIENLIREFKENKEFEIANQYSQIWDIVVDVLDQMVEVMGEEKINIDLFSKILDIGFEAYQIGSIPPALDEVLVTSVDRMKSHNAKALFVIGANDGIFPASSFEEGILTDEDRQILTSYEVELDRDTKAKVFEEQFLVYTALTSTSKFLRISYPIADHEGRSLRPSIIISRFKRIFPQITQFSNVIEMDTDEENLHRVSSPDPTFNEMIKSFKEWDIKDKINSLWLDVYNWYSNKEVWRKRIEKVLEGFNYSNQVRVIPSAKIKRLYKDEINFSVSRLEKYAACPFAYFVQYGLKAKERKIYSFDPPDLGIFMHNVLNEVSKALEKEDKTWEDLDREYCDEVVNIVVDNMLKGVSEHILKSSPRYEYLSKRLTRVLSNAVWVISEHIKRSSFIPSGHEVAFGENQMYPPIKIILSNGEEINLIGRIDRVDVFEKGEESYIRIIDYKSGNKELKLEDVFYGLELQLLIYLDAILESADKENTDIKPAGIFYFRIDDPIVKADKDITDEELQKEILKKLRLDGLVLKDAEIIKEMDKSINGTSYIIPASINKDGTIGKKTKGATKEQFELLRKHVKNMIKDLAEQMINGNISITPYRKGKETACKYCPYSSVCKFETNFEGNKYMFIKEQKEEEIWNMLQKEVNKDGDKVD</sequence>
<gene>
    <name evidence="1" type="primary">addB</name>
    <name type="ordered locus">Teth39_2011</name>
</gene>
<organism>
    <name type="scientific">Thermoanaerobacter pseudethanolicus (strain ATCC 33223 / 39E)</name>
    <name type="common">Clostridium thermohydrosulfuricum</name>
    <dbReference type="NCBI Taxonomy" id="340099"/>
    <lineage>
        <taxon>Bacteria</taxon>
        <taxon>Bacillati</taxon>
        <taxon>Bacillota</taxon>
        <taxon>Clostridia</taxon>
        <taxon>Thermoanaerobacterales</taxon>
        <taxon>Thermoanaerobacteraceae</taxon>
        <taxon>Thermoanaerobacter</taxon>
    </lineage>
</organism>
<name>ADDB_THEP3</name>
<comment type="function">
    <text evidence="1">The heterodimer acts as both an ATP-dependent DNA helicase and an ATP-dependent, dual-direction single-stranded exonuclease. Recognizes the chi site generating a DNA molecule suitable for the initiation of homologous recombination. The AddB subunit has 5' -&gt; 3' nuclease activity but not helicase activity.</text>
</comment>
<comment type="cofactor">
    <cofactor evidence="1">
        <name>Mg(2+)</name>
        <dbReference type="ChEBI" id="CHEBI:18420"/>
    </cofactor>
</comment>
<comment type="cofactor">
    <cofactor evidence="1">
        <name>[4Fe-4S] cluster</name>
        <dbReference type="ChEBI" id="CHEBI:49883"/>
    </cofactor>
    <text evidence="1">Binds 1 [4Fe-4S] cluster.</text>
</comment>
<comment type="subunit">
    <text evidence="1">Heterodimer of AddA and AddB.</text>
</comment>
<comment type="miscellaneous">
    <text evidence="1">Despite having conserved helicase domains, this subunit does not have helicase activity.</text>
</comment>
<comment type="similarity">
    <text evidence="1">Belongs to the helicase family. AddB/RexB type 1 subfamily.</text>
</comment>
<proteinExistence type="inferred from homology"/>
<evidence type="ECO:0000255" key="1">
    <source>
        <dbReference type="HAMAP-Rule" id="MF_01452"/>
    </source>
</evidence>
<keyword id="KW-0004">4Fe-4S</keyword>
<keyword id="KW-0067">ATP-binding</keyword>
<keyword id="KW-0227">DNA damage</keyword>
<keyword id="KW-0234">DNA repair</keyword>
<keyword id="KW-0238">DNA-binding</keyword>
<keyword id="KW-0269">Exonuclease</keyword>
<keyword id="KW-0347">Helicase</keyword>
<keyword id="KW-0378">Hydrolase</keyword>
<keyword id="KW-0408">Iron</keyword>
<keyword id="KW-0411">Iron-sulfur</keyword>
<keyword id="KW-0479">Metal-binding</keyword>
<keyword id="KW-0540">Nuclease</keyword>
<keyword id="KW-0547">Nucleotide-binding</keyword>
<keyword id="KW-1185">Reference proteome</keyword>
<reference key="1">
    <citation type="submission" date="2008-01" db="EMBL/GenBank/DDBJ databases">
        <title>Complete sequence of Thermoanaerobacter pseudethanolicus 39E.</title>
        <authorList>
            <person name="Copeland A."/>
            <person name="Lucas S."/>
            <person name="Lapidus A."/>
            <person name="Barry K."/>
            <person name="Glavina del Rio T."/>
            <person name="Dalin E."/>
            <person name="Tice H."/>
            <person name="Pitluck S."/>
            <person name="Bruce D."/>
            <person name="Goodwin L."/>
            <person name="Saunders E."/>
            <person name="Brettin T."/>
            <person name="Detter J.C."/>
            <person name="Han C."/>
            <person name="Schmutz J."/>
            <person name="Larimer F."/>
            <person name="Land M."/>
            <person name="Hauser L."/>
            <person name="Kyrpides N."/>
            <person name="Lykidis A."/>
            <person name="Hemme C."/>
            <person name="Fields M.W."/>
            <person name="He Z."/>
            <person name="Zhou J."/>
            <person name="Richardson P."/>
        </authorList>
    </citation>
    <scope>NUCLEOTIDE SEQUENCE [LARGE SCALE GENOMIC DNA]</scope>
    <source>
        <strain>ATCC 33223 / DSM 2355 / 39E</strain>
    </source>
</reference>
<protein>
    <recommendedName>
        <fullName evidence="1">ATP-dependent helicase/deoxyribonuclease subunit B</fullName>
        <ecNumber evidence="1">3.1.-.-</ecNumber>
    </recommendedName>
    <alternativeName>
        <fullName evidence="1">ATP-dependent helicase/nuclease subunit AddB</fullName>
    </alternativeName>
</protein>
<dbReference type="EC" id="3.1.-.-" evidence="1"/>
<dbReference type="EMBL" id="CP000924">
    <property type="protein sequence ID" value="ABY95637.1"/>
    <property type="molecule type" value="Genomic_DNA"/>
</dbReference>
<dbReference type="RefSeq" id="WP_009051917.1">
    <property type="nucleotide sequence ID" value="NC_010321.1"/>
</dbReference>
<dbReference type="SMR" id="B0KDB8"/>
<dbReference type="STRING" id="340099.Teth39_2011"/>
<dbReference type="KEGG" id="tpd:Teth39_2011"/>
<dbReference type="eggNOG" id="COG3857">
    <property type="taxonomic scope" value="Bacteria"/>
</dbReference>
<dbReference type="HOGENOM" id="CLU_007838_0_0_9"/>
<dbReference type="Proteomes" id="UP000002156">
    <property type="component" value="Chromosome"/>
</dbReference>
<dbReference type="GO" id="GO:0051539">
    <property type="term" value="F:4 iron, 4 sulfur cluster binding"/>
    <property type="evidence" value="ECO:0007669"/>
    <property type="project" value="UniProtKB-KW"/>
</dbReference>
<dbReference type="GO" id="GO:0008409">
    <property type="term" value="F:5'-3' exonuclease activity"/>
    <property type="evidence" value="ECO:0007669"/>
    <property type="project" value="UniProtKB-UniRule"/>
</dbReference>
<dbReference type="GO" id="GO:0005524">
    <property type="term" value="F:ATP binding"/>
    <property type="evidence" value="ECO:0007669"/>
    <property type="project" value="UniProtKB-UniRule"/>
</dbReference>
<dbReference type="GO" id="GO:0003690">
    <property type="term" value="F:double-stranded DNA binding"/>
    <property type="evidence" value="ECO:0007669"/>
    <property type="project" value="UniProtKB-UniRule"/>
</dbReference>
<dbReference type="GO" id="GO:0004386">
    <property type="term" value="F:helicase activity"/>
    <property type="evidence" value="ECO:0007669"/>
    <property type="project" value="UniProtKB-KW"/>
</dbReference>
<dbReference type="GO" id="GO:0046872">
    <property type="term" value="F:metal ion binding"/>
    <property type="evidence" value="ECO:0007669"/>
    <property type="project" value="UniProtKB-KW"/>
</dbReference>
<dbReference type="GO" id="GO:0000724">
    <property type="term" value="P:double-strand break repair via homologous recombination"/>
    <property type="evidence" value="ECO:0007669"/>
    <property type="project" value="UniProtKB-UniRule"/>
</dbReference>
<dbReference type="Gene3D" id="3.90.320.10">
    <property type="match status" value="1"/>
</dbReference>
<dbReference type="Gene3D" id="6.10.140.1030">
    <property type="match status" value="1"/>
</dbReference>
<dbReference type="Gene3D" id="3.40.50.300">
    <property type="entry name" value="P-loop containing nucleotide triphosphate hydrolases"/>
    <property type="match status" value="3"/>
</dbReference>
<dbReference type="HAMAP" id="MF_01452">
    <property type="entry name" value="AddB_type1"/>
    <property type="match status" value="1"/>
</dbReference>
<dbReference type="InterPro" id="IPR049035">
    <property type="entry name" value="ADDB_N"/>
</dbReference>
<dbReference type="InterPro" id="IPR014140">
    <property type="entry name" value="DNA_helicase_suAddB"/>
</dbReference>
<dbReference type="InterPro" id="IPR027417">
    <property type="entry name" value="P-loop_NTPase"/>
</dbReference>
<dbReference type="InterPro" id="IPR011604">
    <property type="entry name" value="PDDEXK-like_dom_sf"/>
</dbReference>
<dbReference type="InterPro" id="IPR038726">
    <property type="entry name" value="PDDEXK_AddAB-type"/>
</dbReference>
<dbReference type="NCBIfam" id="TIGR02773">
    <property type="entry name" value="addB_Gpos"/>
    <property type="match status" value="1"/>
</dbReference>
<dbReference type="PANTHER" id="PTHR30591">
    <property type="entry name" value="RECBCD ENZYME SUBUNIT RECC"/>
    <property type="match status" value="1"/>
</dbReference>
<dbReference type="PANTHER" id="PTHR30591:SF1">
    <property type="entry name" value="RECBCD ENZYME SUBUNIT RECC"/>
    <property type="match status" value="1"/>
</dbReference>
<dbReference type="Pfam" id="PF21445">
    <property type="entry name" value="ADDB_N"/>
    <property type="match status" value="1"/>
</dbReference>
<dbReference type="Pfam" id="PF12705">
    <property type="entry name" value="PDDEXK_1"/>
    <property type="match status" value="1"/>
</dbReference>
<dbReference type="SUPFAM" id="SSF52540">
    <property type="entry name" value="P-loop containing nucleoside triphosphate hydrolases"/>
    <property type="match status" value="1"/>
</dbReference>
<accession>B0KDB8</accession>
<feature type="chain" id="PRO_0000379224" description="ATP-dependent helicase/deoxyribonuclease subunit B">
    <location>
        <begin position="1"/>
        <end position="1149"/>
    </location>
</feature>
<feature type="binding site" evidence="1">
    <location>
        <begin position="8"/>
        <end position="15"/>
    </location>
    <ligand>
        <name>ATP</name>
        <dbReference type="ChEBI" id="CHEBI:30616"/>
    </ligand>
</feature>
<feature type="binding site" evidence="1">
    <location>
        <position position="784"/>
    </location>
    <ligand>
        <name>[4Fe-4S] cluster</name>
        <dbReference type="ChEBI" id="CHEBI:49883"/>
    </ligand>
</feature>
<feature type="binding site" evidence="1">
    <location>
        <position position="1102"/>
    </location>
    <ligand>
        <name>[4Fe-4S] cluster</name>
        <dbReference type="ChEBI" id="CHEBI:49883"/>
    </ligand>
</feature>
<feature type="binding site" evidence="1">
    <location>
        <position position="1105"/>
    </location>
    <ligand>
        <name>[4Fe-4S] cluster</name>
        <dbReference type="ChEBI" id="CHEBI:49883"/>
    </ligand>
</feature>
<feature type="binding site" evidence="1">
    <location>
        <position position="1111"/>
    </location>
    <ligand>
        <name>[4Fe-4S] cluster</name>
        <dbReference type="ChEBI" id="CHEBI:49883"/>
    </ligand>
</feature>